<accession>P87041</accession>
<accession>O59769</accession>
<dbReference type="EMBL" id="AB023425">
    <property type="protein sequence ID" value="BAA77219.1"/>
    <property type="molecule type" value="mRNA"/>
</dbReference>
<dbReference type="EMBL" id="CU329672">
    <property type="protein sequence ID" value="CAA18638.1"/>
    <property type="molecule type" value="Genomic_DNA"/>
</dbReference>
<dbReference type="EMBL" id="D89616">
    <property type="protein sequence ID" value="BAA24703.1"/>
    <property type="molecule type" value="Genomic_DNA"/>
</dbReference>
<dbReference type="PIR" id="T43506">
    <property type="entry name" value="T43506"/>
</dbReference>
<dbReference type="RefSeq" id="NP_588041.1">
    <property type="nucleotide sequence ID" value="NM_001023033.2"/>
</dbReference>
<dbReference type="SMR" id="P87041"/>
<dbReference type="BioGRID" id="275767">
    <property type="interactions" value="25"/>
</dbReference>
<dbReference type="FunCoup" id="P87041">
    <property type="interactions" value="44"/>
</dbReference>
<dbReference type="STRING" id="284812.P87041"/>
<dbReference type="iPTMnet" id="P87041"/>
<dbReference type="PaxDb" id="4896-SPCC1795.03.1"/>
<dbReference type="EnsemblFungi" id="SPCC1795.03.1">
    <property type="protein sequence ID" value="SPCC1795.03.1:pep"/>
    <property type="gene ID" value="SPCC1795.03"/>
</dbReference>
<dbReference type="GeneID" id="2539196"/>
<dbReference type="KEGG" id="spo:2539196"/>
<dbReference type="PomBase" id="SPCC1795.03">
    <property type="gene designation" value="gms1"/>
</dbReference>
<dbReference type="VEuPathDB" id="FungiDB:SPCC1795.03"/>
<dbReference type="eggNOG" id="KOG2234">
    <property type="taxonomic scope" value="Eukaryota"/>
</dbReference>
<dbReference type="HOGENOM" id="CLU_024645_1_0_1"/>
<dbReference type="InParanoid" id="P87041"/>
<dbReference type="OMA" id="IEEDMMT"/>
<dbReference type="PhylomeDB" id="P87041"/>
<dbReference type="Reactome" id="R-SPO-727802">
    <property type="pathway name" value="Transport of nucleotide sugars"/>
</dbReference>
<dbReference type="PRO" id="PR:P87041"/>
<dbReference type="Proteomes" id="UP000002485">
    <property type="component" value="Chromosome III"/>
</dbReference>
<dbReference type="GO" id="GO:0000139">
    <property type="term" value="C:Golgi membrane"/>
    <property type="evidence" value="ECO:0000314"/>
    <property type="project" value="PomBase"/>
</dbReference>
<dbReference type="GO" id="GO:0005459">
    <property type="term" value="F:UDP-galactose transmembrane transporter activity"/>
    <property type="evidence" value="ECO:0000314"/>
    <property type="project" value="PomBase"/>
</dbReference>
<dbReference type="GO" id="GO:0097624">
    <property type="term" value="P:UDP-galactose transmembrane import into Golgi lumen"/>
    <property type="evidence" value="ECO:0000315"/>
    <property type="project" value="PomBase"/>
</dbReference>
<dbReference type="GO" id="GO:0072334">
    <property type="term" value="P:UDP-galactose transmembrane transport"/>
    <property type="evidence" value="ECO:0000314"/>
    <property type="project" value="PomBase"/>
</dbReference>
<dbReference type="InterPro" id="IPR007271">
    <property type="entry name" value="Nuc_sug_transpt"/>
</dbReference>
<dbReference type="NCBIfam" id="TIGR00803">
    <property type="entry name" value="nst"/>
    <property type="match status" value="1"/>
</dbReference>
<dbReference type="PANTHER" id="PTHR10231">
    <property type="entry name" value="NUCLEOTIDE-SUGAR TRANSMEMBRANE TRANSPORTER"/>
    <property type="match status" value="1"/>
</dbReference>
<dbReference type="Pfam" id="PF04142">
    <property type="entry name" value="Nuc_sug_transp"/>
    <property type="match status" value="1"/>
</dbReference>
<dbReference type="PIRSF" id="PIRSF005799">
    <property type="entry name" value="UDP-gal_transpt"/>
    <property type="match status" value="1"/>
</dbReference>
<dbReference type="SUPFAM" id="SSF103481">
    <property type="entry name" value="Multidrug resistance efflux transporter EmrE"/>
    <property type="match status" value="1"/>
</dbReference>
<comment type="function">
    <text>Essential for the transport of UDP-galactose into the lumen of Golgi apparatus.</text>
</comment>
<comment type="subcellular location">
    <subcellularLocation>
        <location>Golgi apparatus membrane</location>
        <topology>Multi-pass membrane protein</topology>
    </subcellularLocation>
</comment>
<comment type="similarity">
    <text evidence="3">Belongs to the nucleotide-sugar transporter family. SLC35A subfamily.</text>
</comment>
<sequence>MAVKGDDVKWKGIPMKYIALVLLTVQNSALILTLNYSRIMPGYDDKRYFTSTAVLLNELIKLVVCFSVGYHQFRKNVGKEAKLRAFLPQIFGGDSWKLAIPAFLYTCQNNLQYVAAGNLTAASFQVTYQLKILTTAIFSILLLHRRLGPMKWFSLFLLTGGIAIVQLQNLNSDDQMSAGPMNPVTGFSAVLVACLISGLAGVYFEKVLKDTNPSLWVRNVQLSFFSLFPCLFTILMKDYHNIAENGFFFGYNSIVWLAILLQAGGGIIVALCVAFADNIMKNFSTSISIIISSLASVYLMDFKISLTFLIGVMLVIAATFLYTKPESKPSPSRGTYIPMTTQDAAAKDVDHKH</sequence>
<organism>
    <name type="scientific">Schizosaccharomyces pombe (strain 972 / ATCC 24843)</name>
    <name type="common">Fission yeast</name>
    <dbReference type="NCBI Taxonomy" id="284812"/>
    <lineage>
        <taxon>Eukaryota</taxon>
        <taxon>Fungi</taxon>
        <taxon>Dikarya</taxon>
        <taxon>Ascomycota</taxon>
        <taxon>Taphrinomycotina</taxon>
        <taxon>Schizosaccharomycetes</taxon>
        <taxon>Schizosaccharomycetales</taxon>
        <taxon>Schizosaccharomycetaceae</taxon>
        <taxon>Schizosaccharomyces</taxon>
    </lineage>
</organism>
<feature type="chain" id="PRO_0000213362" description="UDP-galactose transporter">
    <location>
        <begin position="1"/>
        <end position="353"/>
    </location>
</feature>
<feature type="transmembrane region" description="Helical" evidence="1">
    <location>
        <begin position="147"/>
        <end position="167"/>
    </location>
</feature>
<feature type="transmembrane region" description="Helical" evidence="1">
    <location>
        <begin position="184"/>
        <end position="204"/>
    </location>
</feature>
<feature type="transmembrane region" description="Helical" evidence="1">
    <location>
        <begin position="215"/>
        <end position="235"/>
    </location>
</feature>
<feature type="transmembrane region" description="Helical" evidence="1">
    <location>
        <begin position="254"/>
        <end position="274"/>
    </location>
</feature>
<feature type="transmembrane region" description="Helical" evidence="1">
    <location>
        <begin position="279"/>
        <end position="299"/>
    </location>
</feature>
<feature type="transmembrane region" description="Helical" evidence="1">
    <location>
        <begin position="302"/>
        <end position="322"/>
    </location>
</feature>
<feature type="region of interest" description="Disordered" evidence="2">
    <location>
        <begin position="325"/>
        <end position="353"/>
    </location>
</feature>
<feature type="compositionally biased region" description="Polar residues" evidence="2">
    <location>
        <begin position="329"/>
        <end position="343"/>
    </location>
</feature>
<proteinExistence type="evidence at transcript level"/>
<keyword id="KW-0333">Golgi apparatus</keyword>
<keyword id="KW-0472">Membrane</keyword>
<keyword id="KW-1185">Reference proteome</keyword>
<keyword id="KW-0762">Sugar transport</keyword>
<keyword id="KW-0812">Transmembrane</keyword>
<keyword id="KW-1133">Transmembrane helix</keyword>
<keyword id="KW-0813">Transport</keyword>
<evidence type="ECO:0000255" key="1"/>
<evidence type="ECO:0000256" key="2">
    <source>
        <dbReference type="SAM" id="MobiDB-lite"/>
    </source>
</evidence>
<evidence type="ECO:0000305" key="3"/>
<name>GMS1_SCHPO</name>
<protein>
    <recommendedName>
        <fullName>UDP-galactose transporter</fullName>
    </recommendedName>
    <alternativeName>
        <fullName>Golgi UDP-Gal transporter</fullName>
    </alternativeName>
</protein>
<reference key="1">
    <citation type="journal article" date="1999" name="FEBS Lett.">
        <title>Schizosaccharomyces pombe UDP-galactose transporter: identification of its functional form through cDNA cloning and expression in mammalian cells.</title>
        <authorList>
            <person name="Segawa H."/>
            <person name="Ishida N."/>
            <person name="Takegawa K."/>
            <person name="Kawakita M."/>
        </authorList>
    </citation>
    <scope>NUCLEOTIDE SEQUENCE [MRNA]</scope>
    <source>
        <strain>TY741</strain>
    </source>
</reference>
<reference key="2">
    <citation type="journal article" date="2002" name="Nature">
        <title>The genome sequence of Schizosaccharomyces pombe.</title>
        <authorList>
            <person name="Wood V."/>
            <person name="Gwilliam R."/>
            <person name="Rajandream M.A."/>
            <person name="Lyne M.H."/>
            <person name="Lyne R."/>
            <person name="Stewart A."/>
            <person name="Sgouros J.G."/>
            <person name="Peat N."/>
            <person name="Hayles J."/>
            <person name="Baker S.G."/>
            <person name="Basham D."/>
            <person name="Bowman S."/>
            <person name="Brooks K."/>
            <person name="Brown D."/>
            <person name="Brown S."/>
            <person name="Chillingworth T."/>
            <person name="Churcher C.M."/>
            <person name="Collins M."/>
            <person name="Connor R."/>
            <person name="Cronin A."/>
            <person name="Davis P."/>
            <person name="Feltwell T."/>
            <person name="Fraser A."/>
            <person name="Gentles S."/>
            <person name="Goble A."/>
            <person name="Hamlin N."/>
            <person name="Harris D.E."/>
            <person name="Hidalgo J."/>
            <person name="Hodgson G."/>
            <person name="Holroyd S."/>
            <person name="Hornsby T."/>
            <person name="Howarth S."/>
            <person name="Huckle E.J."/>
            <person name="Hunt S."/>
            <person name="Jagels K."/>
            <person name="James K.D."/>
            <person name="Jones L."/>
            <person name="Jones M."/>
            <person name="Leather S."/>
            <person name="McDonald S."/>
            <person name="McLean J."/>
            <person name="Mooney P."/>
            <person name="Moule S."/>
            <person name="Mungall K.L."/>
            <person name="Murphy L.D."/>
            <person name="Niblett D."/>
            <person name="Odell C."/>
            <person name="Oliver K."/>
            <person name="O'Neil S."/>
            <person name="Pearson D."/>
            <person name="Quail M.A."/>
            <person name="Rabbinowitsch E."/>
            <person name="Rutherford K.M."/>
            <person name="Rutter S."/>
            <person name="Saunders D."/>
            <person name="Seeger K."/>
            <person name="Sharp S."/>
            <person name="Skelton J."/>
            <person name="Simmonds M.N."/>
            <person name="Squares R."/>
            <person name="Squares S."/>
            <person name="Stevens K."/>
            <person name="Taylor K."/>
            <person name="Taylor R.G."/>
            <person name="Tivey A."/>
            <person name="Walsh S.V."/>
            <person name="Warren T."/>
            <person name="Whitehead S."/>
            <person name="Woodward J.R."/>
            <person name="Volckaert G."/>
            <person name="Aert R."/>
            <person name="Robben J."/>
            <person name="Grymonprez B."/>
            <person name="Weltjens I."/>
            <person name="Vanstreels E."/>
            <person name="Rieger M."/>
            <person name="Schaefer M."/>
            <person name="Mueller-Auer S."/>
            <person name="Gabel C."/>
            <person name="Fuchs M."/>
            <person name="Duesterhoeft A."/>
            <person name="Fritzc C."/>
            <person name="Holzer E."/>
            <person name="Moestl D."/>
            <person name="Hilbert H."/>
            <person name="Borzym K."/>
            <person name="Langer I."/>
            <person name="Beck A."/>
            <person name="Lehrach H."/>
            <person name="Reinhardt R."/>
            <person name="Pohl T.M."/>
            <person name="Eger P."/>
            <person name="Zimmermann W."/>
            <person name="Wedler H."/>
            <person name="Wambutt R."/>
            <person name="Purnelle B."/>
            <person name="Goffeau A."/>
            <person name="Cadieu E."/>
            <person name="Dreano S."/>
            <person name="Gloux S."/>
            <person name="Lelaure V."/>
            <person name="Mottier S."/>
            <person name="Galibert F."/>
            <person name="Aves S.J."/>
            <person name="Xiang Z."/>
            <person name="Hunt C."/>
            <person name="Moore K."/>
            <person name="Hurst S.M."/>
            <person name="Lucas M."/>
            <person name="Rochet M."/>
            <person name="Gaillardin C."/>
            <person name="Tallada V.A."/>
            <person name="Garzon A."/>
            <person name="Thode G."/>
            <person name="Daga R.R."/>
            <person name="Cruzado L."/>
            <person name="Jimenez J."/>
            <person name="Sanchez M."/>
            <person name="del Rey F."/>
            <person name="Benito J."/>
            <person name="Dominguez A."/>
            <person name="Revuelta J.L."/>
            <person name="Moreno S."/>
            <person name="Armstrong J."/>
            <person name="Forsburg S.L."/>
            <person name="Cerutti L."/>
            <person name="Lowe T."/>
            <person name="McCombie W.R."/>
            <person name="Paulsen I."/>
            <person name="Potashkin J."/>
            <person name="Shpakovski G.V."/>
            <person name="Ussery D."/>
            <person name="Barrell B.G."/>
            <person name="Nurse P."/>
        </authorList>
    </citation>
    <scope>NUCLEOTIDE SEQUENCE [LARGE SCALE GENOMIC DNA]</scope>
    <source>
        <strain>972 / ATCC 24843</strain>
    </source>
</reference>
<reference key="3">
    <citation type="journal article" date="1997" name="Biochem. Biophys. Res. Commun.">
        <title>The Schizosaccharomyces pombe gms1+ gene encodes an UDP-galactose transporter homologue required for protein galactosylation.</title>
        <authorList>
            <person name="Tabuchi M."/>
            <person name="Tanaka N."/>
            <person name="Iwahara S."/>
            <person name="Takegawa K."/>
        </authorList>
    </citation>
    <scope>NUCLEOTIDE SEQUENCE [GENOMIC DNA] OF 40-353</scope>
</reference>
<reference key="4">
    <citation type="submission" date="1998-02" db="EMBL/GenBank/DDBJ databases">
        <authorList>
            <person name="Takegawa K."/>
        </authorList>
    </citation>
    <scope>SEQUENCE REVISION TO 164-192</scope>
</reference>
<gene>
    <name type="primary">gms1</name>
    <name type="ORF">SPCC1795.03</name>
</gene>